<evidence type="ECO:0000255" key="1"/>
<evidence type="ECO:0000256" key="2">
    <source>
        <dbReference type="SAM" id="MobiDB-lite"/>
    </source>
</evidence>
<evidence type="ECO:0000305" key="3"/>
<keyword id="KW-0472">Membrane</keyword>
<keyword id="KW-1185">Reference proteome</keyword>
<keyword id="KW-0812">Transmembrane</keyword>
<keyword id="KW-1133">Transmembrane helix</keyword>
<organism>
    <name type="scientific">Dictyostelium discoideum</name>
    <name type="common">Social amoeba</name>
    <dbReference type="NCBI Taxonomy" id="44689"/>
    <lineage>
        <taxon>Eukaryota</taxon>
        <taxon>Amoebozoa</taxon>
        <taxon>Evosea</taxon>
        <taxon>Eumycetozoa</taxon>
        <taxon>Dictyostelia</taxon>
        <taxon>Dictyosteliales</taxon>
        <taxon>Dictyosteliaceae</taxon>
        <taxon>Dictyostelium</taxon>
    </lineage>
</organism>
<proteinExistence type="predicted"/>
<protein>
    <recommendedName>
        <fullName>Uncharacterized transmembrane protein DDB_G0291522</fullName>
    </recommendedName>
</protein>
<comment type="subcellular location">
    <subcellularLocation>
        <location evidence="3">Membrane</location>
        <topology evidence="3">Multi-pass membrane protein</topology>
    </subcellularLocation>
</comment>
<accession>Q54EG5</accession>
<sequence>MCNSIILENKIFDSQWDNKNHTLFENLMPRDNNNLIENSNYDNNNINNNNNNNNTDNDNDNNNDNEPFYNSNIPNEMQINKYSRFGFKPSQPISKKNENQIEFNNILSFSIKSFLLLILYILFFNYQLYSKYFIILLSLNLIITLISIKSIFKYKNLKKLKNILIYKIQSKIIIL</sequence>
<dbReference type="EMBL" id="AAFI02000177">
    <property type="protein sequence ID" value="EAL61745.1"/>
    <property type="molecule type" value="Genomic_DNA"/>
</dbReference>
<dbReference type="RefSeq" id="XP_635275.1">
    <property type="nucleotide sequence ID" value="XM_630183.1"/>
</dbReference>
<dbReference type="PaxDb" id="44689-DDB0183950"/>
<dbReference type="EnsemblProtists" id="EAL61745">
    <property type="protein sequence ID" value="EAL61745"/>
    <property type="gene ID" value="DDB_G0291522"/>
</dbReference>
<dbReference type="GeneID" id="8628219"/>
<dbReference type="KEGG" id="ddi:DDB_G0291522"/>
<dbReference type="dictyBase" id="DDB_G0291522"/>
<dbReference type="VEuPathDB" id="AmoebaDB:DDB_G0291522"/>
<dbReference type="HOGENOM" id="CLU_1535317_0_0_1"/>
<dbReference type="InParanoid" id="Q54EG5"/>
<dbReference type="PRO" id="PR:Q54EG5"/>
<dbReference type="Proteomes" id="UP000002195">
    <property type="component" value="Chromosome 6"/>
</dbReference>
<dbReference type="GO" id="GO:0016020">
    <property type="term" value="C:membrane"/>
    <property type="evidence" value="ECO:0007669"/>
    <property type="project" value="UniProtKB-SubCell"/>
</dbReference>
<name>Y3950_DICDI</name>
<reference key="1">
    <citation type="journal article" date="2005" name="Nature">
        <title>The genome of the social amoeba Dictyostelium discoideum.</title>
        <authorList>
            <person name="Eichinger L."/>
            <person name="Pachebat J.A."/>
            <person name="Gloeckner G."/>
            <person name="Rajandream M.A."/>
            <person name="Sucgang R."/>
            <person name="Berriman M."/>
            <person name="Song J."/>
            <person name="Olsen R."/>
            <person name="Szafranski K."/>
            <person name="Xu Q."/>
            <person name="Tunggal B."/>
            <person name="Kummerfeld S."/>
            <person name="Madera M."/>
            <person name="Konfortov B.A."/>
            <person name="Rivero F."/>
            <person name="Bankier A.T."/>
            <person name="Lehmann R."/>
            <person name="Hamlin N."/>
            <person name="Davies R."/>
            <person name="Gaudet P."/>
            <person name="Fey P."/>
            <person name="Pilcher K."/>
            <person name="Chen G."/>
            <person name="Saunders D."/>
            <person name="Sodergren E.J."/>
            <person name="Davis P."/>
            <person name="Kerhornou A."/>
            <person name="Nie X."/>
            <person name="Hall N."/>
            <person name="Anjard C."/>
            <person name="Hemphill L."/>
            <person name="Bason N."/>
            <person name="Farbrother P."/>
            <person name="Desany B."/>
            <person name="Just E."/>
            <person name="Morio T."/>
            <person name="Rost R."/>
            <person name="Churcher C.M."/>
            <person name="Cooper J."/>
            <person name="Haydock S."/>
            <person name="van Driessche N."/>
            <person name="Cronin A."/>
            <person name="Goodhead I."/>
            <person name="Muzny D.M."/>
            <person name="Mourier T."/>
            <person name="Pain A."/>
            <person name="Lu M."/>
            <person name="Harper D."/>
            <person name="Lindsay R."/>
            <person name="Hauser H."/>
            <person name="James K.D."/>
            <person name="Quiles M."/>
            <person name="Madan Babu M."/>
            <person name="Saito T."/>
            <person name="Buchrieser C."/>
            <person name="Wardroper A."/>
            <person name="Felder M."/>
            <person name="Thangavelu M."/>
            <person name="Johnson D."/>
            <person name="Knights A."/>
            <person name="Loulseged H."/>
            <person name="Mungall K.L."/>
            <person name="Oliver K."/>
            <person name="Price C."/>
            <person name="Quail M.A."/>
            <person name="Urushihara H."/>
            <person name="Hernandez J."/>
            <person name="Rabbinowitsch E."/>
            <person name="Steffen D."/>
            <person name="Sanders M."/>
            <person name="Ma J."/>
            <person name="Kohara Y."/>
            <person name="Sharp S."/>
            <person name="Simmonds M.N."/>
            <person name="Spiegler S."/>
            <person name="Tivey A."/>
            <person name="Sugano S."/>
            <person name="White B."/>
            <person name="Walker D."/>
            <person name="Woodward J.R."/>
            <person name="Winckler T."/>
            <person name="Tanaka Y."/>
            <person name="Shaulsky G."/>
            <person name="Schleicher M."/>
            <person name="Weinstock G.M."/>
            <person name="Rosenthal A."/>
            <person name="Cox E.C."/>
            <person name="Chisholm R.L."/>
            <person name="Gibbs R.A."/>
            <person name="Loomis W.F."/>
            <person name="Platzer M."/>
            <person name="Kay R.R."/>
            <person name="Williams J.G."/>
            <person name="Dear P.H."/>
            <person name="Noegel A.A."/>
            <person name="Barrell B.G."/>
            <person name="Kuspa A."/>
        </authorList>
    </citation>
    <scope>NUCLEOTIDE SEQUENCE [LARGE SCALE GENOMIC DNA]</scope>
    <source>
        <strain>AX4</strain>
    </source>
</reference>
<feature type="chain" id="PRO_0000346880" description="Uncharacterized transmembrane protein DDB_G0291522">
    <location>
        <begin position="1"/>
        <end position="175"/>
    </location>
</feature>
<feature type="transmembrane region" description="Helical" evidence="1">
    <location>
        <begin position="106"/>
        <end position="126"/>
    </location>
</feature>
<feature type="transmembrane region" description="Helical" evidence="1">
    <location>
        <begin position="132"/>
        <end position="152"/>
    </location>
</feature>
<feature type="region of interest" description="Disordered" evidence="2">
    <location>
        <begin position="35"/>
        <end position="70"/>
    </location>
</feature>
<feature type="compositionally biased region" description="Low complexity" evidence="2">
    <location>
        <begin position="35"/>
        <end position="56"/>
    </location>
</feature>
<gene>
    <name type="ORF">DDB_G0291522</name>
</gene>